<organism>
    <name type="scientific">Legionella pneumophila (strain Lens)</name>
    <dbReference type="NCBI Taxonomy" id="297245"/>
    <lineage>
        <taxon>Bacteria</taxon>
        <taxon>Pseudomonadati</taxon>
        <taxon>Pseudomonadota</taxon>
        <taxon>Gammaproteobacteria</taxon>
        <taxon>Legionellales</taxon>
        <taxon>Legionellaceae</taxon>
        <taxon>Legionella</taxon>
    </lineage>
</organism>
<sequence length="362" mass="41103">MKKSLELKLQQMLERYEEVGRLLSEASIIADQNQFKSLSKEYAQLEPVSQCYESYLEAKNNLDSLNELLESDDKDLATMAEEEIDTVKKQIEELDEQLQWHLIPKDPDDERNIYLEVRAGTGGDEAAIFAGDLFRMYSRYAESQGWQIELISASHGEHGGYKEIIAKISGQAVYSQLKFESGAHRVQRVPETESQGRVHTSACTVAIMPEVDEINDIQINPDDLRIDTYRSSGAGGQHVNKTDSAIRITHIPTGVVVECQDERSQHKNRAKAMSLLKTRLLDAEVSKQKQEQAQTRKSLVGTGDRSERIRTYNFPQGRLTDHRINLTIYQLSDIMEGNLSLVIDPLKREYHAELLADLGRHD</sequence>
<feature type="chain" id="PRO_0000177689" description="Peptide chain release factor 1">
    <location>
        <begin position="1"/>
        <end position="362"/>
    </location>
</feature>
<feature type="modified residue" description="N5-methylglutamine" evidence="1">
    <location>
        <position position="237"/>
    </location>
</feature>
<evidence type="ECO:0000255" key="1">
    <source>
        <dbReference type="HAMAP-Rule" id="MF_00093"/>
    </source>
</evidence>
<dbReference type="EMBL" id="CR628337">
    <property type="protein sequence ID" value="CAH16497.1"/>
    <property type="molecule type" value="Genomic_DNA"/>
</dbReference>
<dbReference type="RefSeq" id="WP_010948042.1">
    <property type="nucleotide sequence ID" value="NC_006369.1"/>
</dbReference>
<dbReference type="SMR" id="Q5WUB1"/>
<dbReference type="GeneID" id="57036328"/>
<dbReference type="KEGG" id="lpf:lpl2257"/>
<dbReference type="LegioList" id="lpl2257"/>
<dbReference type="HOGENOM" id="CLU_036856_0_1_6"/>
<dbReference type="Proteomes" id="UP000002517">
    <property type="component" value="Chromosome"/>
</dbReference>
<dbReference type="GO" id="GO:0005737">
    <property type="term" value="C:cytoplasm"/>
    <property type="evidence" value="ECO:0007669"/>
    <property type="project" value="UniProtKB-SubCell"/>
</dbReference>
<dbReference type="GO" id="GO:0016149">
    <property type="term" value="F:translation release factor activity, codon specific"/>
    <property type="evidence" value="ECO:0007669"/>
    <property type="project" value="UniProtKB-UniRule"/>
</dbReference>
<dbReference type="FunFam" id="3.30.160.20:FF:000004">
    <property type="entry name" value="Peptide chain release factor 1"/>
    <property type="match status" value="1"/>
</dbReference>
<dbReference type="FunFam" id="3.30.70.1660:FF:000002">
    <property type="entry name" value="Peptide chain release factor 1"/>
    <property type="match status" value="1"/>
</dbReference>
<dbReference type="FunFam" id="3.30.70.1660:FF:000004">
    <property type="entry name" value="Peptide chain release factor 1"/>
    <property type="match status" value="1"/>
</dbReference>
<dbReference type="Gene3D" id="3.30.160.20">
    <property type="match status" value="1"/>
</dbReference>
<dbReference type="Gene3D" id="3.30.70.1660">
    <property type="match status" value="1"/>
</dbReference>
<dbReference type="Gene3D" id="6.10.140.1950">
    <property type="match status" value="1"/>
</dbReference>
<dbReference type="HAMAP" id="MF_00093">
    <property type="entry name" value="Rel_fac_1"/>
    <property type="match status" value="1"/>
</dbReference>
<dbReference type="InterPro" id="IPR005139">
    <property type="entry name" value="PCRF"/>
</dbReference>
<dbReference type="InterPro" id="IPR000352">
    <property type="entry name" value="Pep_chain_release_fac_I"/>
</dbReference>
<dbReference type="InterPro" id="IPR045853">
    <property type="entry name" value="Pep_chain_release_fac_I_sf"/>
</dbReference>
<dbReference type="InterPro" id="IPR050057">
    <property type="entry name" value="Prokaryotic/Mito_RF"/>
</dbReference>
<dbReference type="InterPro" id="IPR004373">
    <property type="entry name" value="RF-1"/>
</dbReference>
<dbReference type="NCBIfam" id="TIGR00019">
    <property type="entry name" value="prfA"/>
    <property type="match status" value="1"/>
</dbReference>
<dbReference type="NCBIfam" id="NF001859">
    <property type="entry name" value="PRK00591.1"/>
    <property type="match status" value="1"/>
</dbReference>
<dbReference type="PANTHER" id="PTHR43804">
    <property type="entry name" value="LD18447P"/>
    <property type="match status" value="1"/>
</dbReference>
<dbReference type="PANTHER" id="PTHR43804:SF7">
    <property type="entry name" value="LD18447P"/>
    <property type="match status" value="1"/>
</dbReference>
<dbReference type="Pfam" id="PF03462">
    <property type="entry name" value="PCRF"/>
    <property type="match status" value="1"/>
</dbReference>
<dbReference type="Pfam" id="PF00472">
    <property type="entry name" value="RF-1"/>
    <property type="match status" value="1"/>
</dbReference>
<dbReference type="SMART" id="SM00937">
    <property type="entry name" value="PCRF"/>
    <property type="match status" value="1"/>
</dbReference>
<dbReference type="SUPFAM" id="SSF75620">
    <property type="entry name" value="Release factor"/>
    <property type="match status" value="1"/>
</dbReference>
<dbReference type="PROSITE" id="PS00745">
    <property type="entry name" value="RF_PROK_I"/>
    <property type="match status" value="1"/>
</dbReference>
<comment type="function">
    <text evidence="1">Peptide chain release factor 1 directs the termination of translation in response to the peptide chain termination codons UAG and UAA.</text>
</comment>
<comment type="subcellular location">
    <subcellularLocation>
        <location evidence="1">Cytoplasm</location>
    </subcellularLocation>
</comment>
<comment type="PTM">
    <text evidence="1">Methylated by PrmC. Methylation increases the termination efficiency of RF1.</text>
</comment>
<comment type="similarity">
    <text evidence="1">Belongs to the prokaryotic/mitochondrial release factor family.</text>
</comment>
<proteinExistence type="inferred from homology"/>
<reference key="1">
    <citation type="journal article" date="2004" name="Nat. Genet.">
        <title>Evidence in the Legionella pneumophila genome for exploitation of host cell functions and high genome plasticity.</title>
        <authorList>
            <person name="Cazalet C."/>
            <person name="Rusniok C."/>
            <person name="Brueggemann H."/>
            <person name="Zidane N."/>
            <person name="Magnier A."/>
            <person name="Ma L."/>
            <person name="Tichit M."/>
            <person name="Jarraud S."/>
            <person name="Bouchier C."/>
            <person name="Vandenesch F."/>
            <person name="Kunst F."/>
            <person name="Etienne J."/>
            <person name="Glaser P."/>
            <person name="Buchrieser C."/>
        </authorList>
    </citation>
    <scope>NUCLEOTIDE SEQUENCE [LARGE SCALE GENOMIC DNA]</scope>
    <source>
        <strain>Lens</strain>
    </source>
</reference>
<gene>
    <name evidence="1" type="primary">prfA</name>
    <name type="ordered locus">lpl2257</name>
</gene>
<accession>Q5WUB1</accession>
<protein>
    <recommendedName>
        <fullName evidence="1">Peptide chain release factor 1</fullName>
        <shortName evidence="1">RF-1</shortName>
    </recommendedName>
</protein>
<keyword id="KW-0963">Cytoplasm</keyword>
<keyword id="KW-0488">Methylation</keyword>
<keyword id="KW-0648">Protein biosynthesis</keyword>
<name>RF1_LEGPL</name>